<proteinExistence type="evidence at transcript level"/>
<sequence>MNVGVAHSEVNPNTRVMNSRGIWLTYALGVGMLHIVLLSIPFFSVPVVWTLTNVIHNFGMYVFMHAVKGTPFETPDQGKARLLTHWEQLDYGVQFTSSRKFFTISPIILYFLASFYTKYDTAHFVINTASLLSVLIPKLPQLHGVRIFGINKY</sequence>
<evidence type="ECO:0000250" key="1">
    <source>
        <dbReference type="UniProtKB" id="Q8N138"/>
    </source>
</evidence>
<evidence type="ECO:0000250" key="2">
    <source>
        <dbReference type="UniProtKB" id="Q921I0"/>
    </source>
</evidence>
<evidence type="ECO:0000250" key="3">
    <source>
        <dbReference type="UniProtKB" id="Q9P0S3"/>
    </source>
</evidence>
<evidence type="ECO:0000255" key="4"/>
<evidence type="ECO:0000305" key="5"/>
<keyword id="KW-0256">Endoplasmic reticulum</keyword>
<keyword id="KW-0472">Membrane</keyword>
<keyword id="KW-1185">Reference proteome</keyword>
<keyword id="KW-0812">Transmembrane</keyword>
<keyword id="KW-1133">Transmembrane helix</keyword>
<reference key="1">
    <citation type="journal article" date="2013" name="Nature">
        <title>The zebrafish reference genome sequence and its relationship to the human genome.</title>
        <authorList>
            <person name="Howe K."/>
            <person name="Clark M.D."/>
            <person name="Torroja C.F."/>
            <person name="Torrance J."/>
            <person name="Berthelot C."/>
            <person name="Muffato M."/>
            <person name="Collins J.E."/>
            <person name="Humphray S."/>
            <person name="McLaren K."/>
            <person name="Matthews L."/>
            <person name="McLaren S."/>
            <person name="Sealy I."/>
            <person name="Caccamo M."/>
            <person name="Churcher C."/>
            <person name="Scott C."/>
            <person name="Barrett J.C."/>
            <person name="Koch R."/>
            <person name="Rauch G.J."/>
            <person name="White S."/>
            <person name="Chow W."/>
            <person name="Kilian B."/>
            <person name="Quintais L.T."/>
            <person name="Guerra-Assuncao J.A."/>
            <person name="Zhou Y."/>
            <person name="Gu Y."/>
            <person name="Yen J."/>
            <person name="Vogel J.H."/>
            <person name="Eyre T."/>
            <person name="Redmond S."/>
            <person name="Banerjee R."/>
            <person name="Chi J."/>
            <person name="Fu B."/>
            <person name="Langley E."/>
            <person name="Maguire S.F."/>
            <person name="Laird G.K."/>
            <person name="Lloyd D."/>
            <person name="Kenyon E."/>
            <person name="Donaldson S."/>
            <person name="Sehra H."/>
            <person name="Almeida-King J."/>
            <person name="Loveland J."/>
            <person name="Trevanion S."/>
            <person name="Jones M."/>
            <person name="Quail M."/>
            <person name="Willey D."/>
            <person name="Hunt A."/>
            <person name="Burton J."/>
            <person name="Sims S."/>
            <person name="McLay K."/>
            <person name="Plumb B."/>
            <person name="Davis J."/>
            <person name="Clee C."/>
            <person name="Oliver K."/>
            <person name="Clark R."/>
            <person name="Riddle C."/>
            <person name="Elliot D."/>
            <person name="Threadgold G."/>
            <person name="Harden G."/>
            <person name="Ware D."/>
            <person name="Begum S."/>
            <person name="Mortimore B."/>
            <person name="Kerry G."/>
            <person name="Heath P."/>
            <person name="Phillimore B."/>
            <person name="Tracey A."/>
            <person name="Corby N."/>
            <person name="Dunn M."/>
            <person name="Johnson C."/>
            <person name="Wood J."/>
            <person name="Clark S."/>
            <person name="Pelan S."/>
            <person name="Griffiths G."/>
            <person name="Smith M."/>
            <person name="Glithero R."/>
            <person name="Howden P."/>
            <person name="Barker N."/>
            <person name="Lloyd C."/>
            <person name="Stevens C."/>
            <person name="Harley J."/>
            <person name="Holt K."/>
            <person name="Panagiotidis G."/>
            <person name="Lovell J."/>
            <person name="Beasley H."/>
            <person name="Henderson C."/>
            <person name="Gordon D."/>
            <person name="Auger K."/>
            <person name="Wright D."/>
            <person name="Collins J."/>
            <person name="Raisen C."/>
            <person name="Dyer L."/>
            <person name="Leung K."/>
            <person name="Robertson L."/>
            <person name="Ambridge K."/>
            <person name="Leongamornlert D."/>
            <person name="McGuire S."/>
            <person name="Gilderthorp R."/>
            <person name="Griffiths C."/>
            <person name="Manthravadi D."/>
            <person name="Nichol S."/>
            <person name="Barker G."/>
            <person name="Whitehead S."/>
            <person name="Kay M."/>
            <person name="Brown J."/>
            <person name="Murnane C."/>
            <person name="Gray E."/>
            <person name="Humphries M."/>
            <person name="Sycamore N."/>
            <person name="Barker D."/>
            <person name="Saunders D."/>
            <person name="Wallis J."/>
            <person name="Babbage A."/>
            <person name="Hammond S."/>
            <person name="Mashreghi-Mohammadi M."/>
            <person name="Barr L."/>
            <person name="Martin S."/>
            <person name="Wray P."/>
            <person name="Ellington A."/>
            <person name="Matthews N."/>
            <person name="Ellwood M."/>
            <person name="Woodmansey R."/>
            <person name="Clark G."/>
            <person name="Cooper J."/>
            <person name="Tromans A."/>
            <person name="Grafham D."/>
            <person name="Skuce C."/>
            <person name="Pandian R."/>
            <person name="Andrews R."/>
            <person name="Harrison E."/>
            <person name="Kimberley A."/>
            <person name="Garnett J."/>
            <person name="Fosker N."/>
            <person name="Hall R."/>
            <person name="Garner P."/>
            <person name="Kelly D."/>
            <person name="Bird C."/>
            <person name="Palmer S."/>
            <person name="Gehring I."/>
            <person name="Berger A."/>
            <person name="Dooley C.M."/>
            <person name="Ersan-Urun Z."/>
            <person name="Eser C."/>
            <person name="Geiger H."/>
            <person name="Geisler M."/>
            <person name="Karotki L."/>
            <person name="Kirn A."/>
            <person name="Konantz J."/>
            <person name="Konantz M."/>
            <person name="Oberlander M."/>
            <person name="Rudolph-Geiger S."/>
            <person name="Teucke M."/>
            <person name="Lanz C."/>
            <person name="Raddatz G."/>
            <person name="Osoegawa K."/>
            <person name="Zhu B."/>
            <person name="Rapp A."/>
            <person name="Widaa S."/>
            <person name="Langford C."/>
            <person name="Yang F."/>
            <person name="Schuster S.C."/>
            <person name="Carter N.P."/>
            <person name="Harrow J."/>
            <person name="Ning Z."/>
            <person name="Herrero J."/>
            <person name="Searle S.M."/>
            <person name="Enright A."/>
            <person name="Geisler R."/>
            <person name="Plasterk R.H."/>
            <person name="Lee C."/>
            <person name="Westerfield M."/>
            <person name="de Jong P.J."/>
            <person name="Zon L.I."/>
            <person name="Postlethwait J.H."/>
            <person name="Nusslein-Volhard C."/>
            <person name="Hubbard T.J."/>
            <person name="Roest Crollius H."/>
            <person name="Rogers J."/>
            <person name="Stemple D.L."/>
        </authorList>
    </citation>
    <scope>NUCLEOTIDE SEQUENCE [LARGE SCALE GENOMIC DNA]</scope>
    <source>
        <strain>Tuebingen</strain>
    </source>
</reference>
<reference key="2">
    <citation type="submission" date="2003-10" db="EMBL/GenBank/DDBJ databases">
        <authorList>
            <consortium name="NIH - Zebrafish Gene Collection (ZGC) project"/>
        </authorList>
    </citation>
    <scope>NUCLEOTIDE SEQUENCE [LARGE SCALE MRNA]</scope>
    <source>
        <tissue>Kidney</tissue>
        <tissue>Retina</tissue>
    </source>
</reference>
<protein>
    <recommendedName>
        <fullName>ORM1-like protein 1</fullName>
    </recommendedName>
</protein>
<name>ORML1_DANRE</name>
<organism>
    <name type="scientific">Danio rerio</name>
    <name type="common">Zebrafish</name>
    <name type="synonym">Brachydanio rerio</name>
    <dbReference type="NCBI Taxonomy" id="7955"/>
    <lineage>
        <taxon>Eukaryota</taxon>
        <taxon>Metazoa</taxon>
        <taxon>Chordata</taxon>
        <taxon>Craniata</taxon>
        <taxon>Vertebrata</taxon>
        <taxon>Euteleostomi</taxon>
        <taxon>Actinopterygii</taxon>
        <taxon>Neopterygii</taxon>
        <taxon>Teleostei</taxon>
        <taxon>Ostariophysi</taxon>
        <taxon>Cypriniformes</taxon>
        <taxon>Danionidae</taxon>
        <taxon>Danioninae</taxon>
        <taxon>Danio</taxon>
    </lineage>
</organism>
<comment type="function">
    <text evidence="1 2">Plays an essential role in the homeostatic regulation of sphingolipid de novo biosynthesis by modulating the activity of the serine palmitoyltransferase (SPT) in response to ceramide levels (By similarity). When complexed to SPT, the binding of ceramides to its N-terminus stabilizes a conformation that block SPT substrate entry, hence preventing SPT catalytic activity. Through this mechanism, maintains ceramide levels at sufficient concentrations for the production of complex sphingolipids, but which prevents the accumulation of ceramides to levels that trigger apoptosis (By similarity).</text>
</comment>
<comment type="subunit">
    <text evidence="1">Ceramide-sensitive subunit of the serine palmitoyltransferase (SPT) complex, which is also composed of SPTLC1, SPTLC2/3 and SPTSSA/B.</text>
</comment>
<comment type="subcellular location">
    <subcellularLocation>
        <location evidence="3">Endoplasmic reticulum membrane</location>
        <topology evidence="3">Multi-pass membrane protein</topology>
    </subcellularLocation>
</comment>
<comment type="domain">
    <text evidence="1">Ceramides bind to ORMDL3 N-terminus and stabilize it in a conformation that physically restricts the accessibility of the substrates to their binding sites in the serine palmitoyltransferase (SPT) complex, hence inhibiting SPT catalytic activity. In the absence of ceramides, the N-terminus is flexible and permits substrate binding, thus liberating SPT from inhibition.</text>
</comment>
<comment type="similarity">
    <text evidence="5">Belongs to the ORM family.</text>
</comment>
<accession>Q8JFB7</accession>
<dbReference type="EMBL" id="AL591593">
    <property type="protein sequence ID" value="CAD43469.1"/>
    <property type="molecule type" value="Genomic_DNA"/>
</dbReference>
<dbReference type="EMBL" id="AL672217">
    <property type="protein sequence ID" value="CAD43441.1"/>
    <property type="molecule type" value="Genomic_DNA"/>
</dbReference>
<dbReference type="EMBL" id="BC059514">
    <property type="protein sequence ID" value="AAH59514.1"/>
    <property type="molecule type" value="mRNA"/>
</dbReference>
<dbReference type="EMBL" id="BC065474">
    <property type="protein sequence ID" value="AAH65474.1"/>
    <property type="molecule type" value="mRNA"/>
</dbReference>
<dbReference type="EMBL" id="BC068376">
    <property type="protein sequence ID" value="AAH68376.1"/>
    <property type="molecule type" value="mRNA"/>
</dbReference>
<dbReference type="RefSeq" id="NP_956387.1">
    <property type="nucleotide sequence ID" value="NM_200093.1"/>
</dbReference>
<dbReference type="SMR" id="Q8JFB7"/>
<dbReference type="FunCoup" id="Q8JFB7">
    <property type="interactions" value="1307"/>
</dbReference>
<dbReference type="STRING" id="7955.ENSDARP00000021751"/>
<dbReference type="PaxDb" id="7955-ENSDARP00000021751"/>
<dbReference type="Ensembl" id="ENSDART00000014660">
    <property type="protein sequence ID" value="ENSDARP00000021751"/>
    <property type="gene ID" value="ENSDARG00000014333"/>
</dbReference>
<dbReference type="GeneID" id="368632"/>
<dbReference type="KEGG" id="dre:368632"/>
<dbReference type="AGR" id="ZFIN:ZDB-GENE-030616-529"/>
<dbReference type="CTD" id="94101"/>
<dbReference type="ZFIN" id="ZDB-GENE-030616-529">
    <property type="gene designation" value="ormdl1"/>
</dbReference>
<dbReference type="eggNOG" id="KOG3319">
    <property type="taxonomic scope" value="Eukaryota"/>
</dbReference>
<dbReference type="HOGENOM" id="CLU_072117_3_0_1"/>
<dbReference type="InParanoid" id="Q8JFB7"/>
<dbReference type="OMA" id="IVSAFRC"/>
<dbReference type="OrthoDB" id="1932233at2759"/>
<dbReference type="PhylomeDB" id="Q8JFB7"/>
<dbReference type="TreeFam" id="TF323369"/>
<dbReference type="Reactome" id="R-DRE-1660661">
    <property type="pathway name" value="Sphingolipid de novo biosynthesis"/>
</dbReference>
<dbReference type="PRO" id="PR:Q8JFB7"/>
<dbReference type="Proteomes" id="UP000000437">
    <property type="component" value="Chromosome 9"/>
</dbReference>
<dbReference type="Bgee" id="ENSDARG00000014333">
    <property type="expression patterns" value="Expressed in liver and 21 other cell types or tissues"/>
</dbReference>
<dbReference type="ExpressionAtlas" id="Q8JFB7">
    <property type="expression patterns" value="baseline"/>
</dbReference>
<dbReference type="GO" id="GO:0005789">
    <property type="term" value="C:endoplasmic reticulum membrane"/>
    <property type="evidence" value="ECO:0000250"/>
    <property type="project" value="UniProtKB"/>
</dbReference>
<dbReference type="GO" id="GO:0017059">
    <property type="term" value="C:serine palmitoyltransferase complex"/>
    <property type="evidence" value="ECO:0000318"/>
    <property type="project" value="GO_Central"/>
</dbReference>
<dbReference type="GO" id="GO:0006672">
    <property type="term" value="P:ceramide metabolic process"/>
    <property type="evidence" value="ECO:0000250"/>
    <property type="project" value="UniProtKB"/>
</dbReference>
<dbReference type="GO" id="GO:0090156">
    <property type="term" value="P:intracellular sphingolipid homeostasis"/>
    <property type="evidence" value="ECO:0000318"/>
    <property type="project" value="GO_Central"/>
</dbReference>
<dbReference type="GO" id="GO:2000303">
    <property type="term" value="P:regulation of ceramide biosynthetic process"/>
    <property type="evidence" value="ECO:0007669"/>
    <property type="project" value="UniProtKB-ARBA"/>
</dbReference>
<dbReference type="GO" id="GO:0030148">
    <property type="term" value="P:sphingolipid biosynthetic process"/>
    <property type="evidence" value="ECO:0000318"/>
    <property type="project" value="GO_Central"/>
</dbReference>
<dbReference type="InterPro" id="IPR007203">
    <property type="entry name" value="ORMDL"/>
</dbReference>
<dbReference type="PANTHER" id="PTHR12665">
    <property type="entry name" value="ORMDL PROTEINS"/>
    <property type="match status" value="1"/>
</dbReference>
<dbReference type="Pfam" id="PF04061">
    <property type="entry name" value="ORMDL"/>
    <property type="match status" value="1"/>
</dbReference>
<dbReference type="PIRSF" id="PIRSF018147">
    <property type="entry name" value="ORMDL"/>
    <property type="match status" value="1"/>
</dbReference>
<feature type="chain" id="PRO_0000215633" description="ORM1-like protein 1">
    <location>
        <begin position="1"/>
        <end position="153"/>
    </location>
</feature>
<feature type="topological domain" description="Cytoplasmic" evidence="4">
    <location>
        <begin position="1"/>
        <end position="27"/>
    </location>
</feature>
<feature type="transmembrane region" description="Helical" evidence="4">
    <location>
        <begin position="28"/>
        <end position="46"/>
    </location>
</feature>
<feature type="transmembrane region" description="Helical" evidence="4">
    <location>
        <begin position="47"/>
        <end position="64"/>
    </location>
</feature>
<feature type="topological domain" description="Cytoplasmic" evidence="4">
    <location>
        <begin position="65"/>
        <end position="105"/>
    </location>
</feature>
<feature type="transmembrane region" description="Helical" evidence="4">
    <location>
        <begin position="106"/>
        <end position="123"/>
    </location>
</feature>
<feature type="transmembrane region" description="Helical" evidence="4">
    <location>
        <begin position="124"/>
        <end position="140"/>
    </location>
</feature>
<feature type="topological domain" description="Cytoplasmic" evidence="4">
    <location>
        <begin position="141"/>
        <end position="153"/>
    </location>
</feature>
<gene>
    <name type="primary">ormdl1</name>
    <name type="ORF">si:busm1-72b14.3</name>
    <name type="ORF">si:dz72b14.3</name>
</gene>